<dbReference type="EC" id="3.-.-.-"/>
<dbReference type="EMBL" id="CP000253">
    <property type="protein sequence ID" value="ABD31485.1"/>
    <property type="molecule type" value="Genomic_DNA"/>
</dbReference>
<dbReference type="RefSeq" id="WP_000044363.1">
    <property type="nucleotide sequence ID" value="NZ_LS483365.1"/>
</dbReference>
<dbReference type="RefSeq" id="YP_500933.1">
    <property type="nucleotide sequence ID" value="NC_007795.1"/>
</dbReference>
<dbReference type="SMR" id="Q2FW52"/>
<dbReference type="STRING" id="93061.SAOUHSC_02465"/>
<dbReference type="PaxDb" id="1280-SAXN108_2457"/>
<dbReference type="GeneID" id="3919028"/>
<dbReference type="KEGG" id="sao:SAOUHSC_02465"/>
<dbReference type="PATRIC" id="fig|93061.5.peg.2224"/>
<dbReference type="eggNOG" id="COG0561">
    <property type="taxonomic scope" value="Bacteria"/>
</dbReference>
<dbReference type="HOGENOM" id="CLU_084693_0_0_9"/>
<dbReference type="OrthoDB" id="9781413at2"/>
<dbReference type="PRO" id="PR:Q2FW52"/>
<dbReference type="Proteomes" id="UP000008816">
    <property type="component" value="Chromosome"/>
</dbReference>
<dbReference type="GO" id="GO:0005829">
    <property type="term" value="C:cytosol"/>
    <property type="evidence" value="ECO:0000318"/>
    <property type="project" value="GO_Central"/>
</dbReference>
<dbReference type="GO" id="GO:0000287">
    <property type="term" value="F:magnesium ion binding"/>
    <property type="evidence" value="ECO:0000318"/>
    <property type="project" value="GO_Central"/>
</dbReference>
<dbReference type="GO" id="GO:0016791">
    <property type="term" value="F:phosphatase activity"/>
    <property type="evidence" value="ECO:0000318"/>
    <property type="project" value="GO_Central"/>
</dbReference>
<dbReference type="CDD" id="cd02605">
    <property type="entry name" value="HAD_SPP"/>
    <property type="match status" value="1"/>
</dbReference>
<dbReference type="Gene3D" id="3.40.50.1000">
    <property type="entry name" value="HAD superfamily/HAD-like"/>
    <property type="match status" value="1"/>
</dbReference>
<dbReference type="Gene3D" id="3.30.70.1410">
    <property type="entry name" value="yhjk (haloacid dehalogenase-like hydrolase protein) domain"/>
    <property type="match status" value="1"/>
</dbReference>
<dbReference type="InterPro" id="IPR036412">
    <property type="entry name" value="HAD-like_sf"/>
</dbReference>
<dbReference type="InterPro" id="IPR006379">
    <property type="entry name" value="HAD-SF_hydro_IIB"/>
</dbReference>
<dbReference type="InterPro" id="IPR023214">
    <property type="entry name" value="HAD_sf"/>
</dbReference>
<dbReference type="InterPro" id="IPR006380">
    <property type="entry name" value="SPP-like_dom"/>
</dbReference>
<dbReference type="NCBIfam" id="TIGR01484">
    <property type="entry name" value="HAD-SF-IIB"/>
    <property type="match status" value="1"/>
</dbReference>
<dbReference type="PANTHER" id="PTHR10000:SF57">
    <property type="entry name" value="KANOSAMINE-6-PHOSPHATE PHOSPHATASE"/>
    <property type="match status" value="1"/>
</dbReference>
<dbReference type="PANTHER" id="PTHR10000">
    <property type="entry name" value="PHOSPHOSERINE PHOSPHATASE"/>
    <property type="match status" value="1"/>
</dbReference>
<dbReference type="Pfam" id="PF05116">
    <property type="entry name" value="S6PP"/>
    <property type="match status" value="1"/>
</dbReference>
<dbReference type="SFLD" id="SFLDG01141">
    <property type="entry name" value="C2.B.1:_Sucrose_Phosphatase_Li"/>
    <property type="match status" value="1"/>
</dbReference>
<dbReference type="SFLD" id="SFLDS00003">
    <property type="entry name" value="Haloacid_Dehalogenase"/>
    <property type="match status" value="1"/>
</dbReference>
<dbReference type="SUPFAM" id="SSF56784">
    <property type="entry name" value="HAD-like"/>
    <property type="match status" value="1"/>
</dbReference>
<feature type="chain" id="PRO_0000296090" description="Uncharacterized hydrolase SAOUHSC_02465">
    <location>
        <begin position="1"/>
        <end position="271"/>
    </location>
</feature>
<name>Y2465_STAA8</name>
<protein>
    <recommendedName>
        <fullName>Uncharacterized hydrolase SAOUHSC_02465</fullName>
        <ecNumber>3.-.-.-</ecNumber>
    </recommendedName>
</protein>
<organism>
    <name type="scientific">Staphylococcus aureus (strain NCTC 8325 / PS 47)</name>
    <dbReference type="NCBI Taxonomy" id="93061"/>
    <lineage>
        <taxon>Bacteria</taxon>
        <taxon>Bacillati</taxon>
        <taxon>Bacillota</taxon>
        <taxon>Bacilli</taxon>
        <taxon>Bacillales</taxon>
        <taxon>Staphylococcaceae</taxon>
        <taxon>Staphylococcus</taxon>
    </lineage>
</organism>
<reference key="1">
    <citation type="book" date="2006" name="Gram positive pathogens, 2nd edition">
        <title>The Staphylococcus aureus NCTC 8325 genome.</title>
        <editorList>
            <person name="Fischetti V."/>
            <person name="Novick R."/>
            <person name="Ferretti J."/>
            <person name="Portnoy D."/>
            <person name="Rood J."/>
        </editorList>
        <authorList>
            <person name="Gillaspy A.F."/>
            <person name="Worrell V."/>
            <person name="Orvis J."/>
            <person name="Roe B.A."/>
            <person name="Dyer D.W."/>
            <person name="Iandolo J.J."/>
        </authorList>
    </citation>
    <scope>NUCLEOTIDE SEQUENCE [LARGE SCALE GENOMIC DNA]</scope>
    <source>
        <strain>NCTC 8325 / PS 47</strain>
    </source>
</reference>
<gene>
    <name type="ordered locus">SAOUHSC_02465</name>
</gene>
<accession>Q2FW52</accession>
<evidence type="ECO:0000305" key="1"/>
<sequence length="271" mass="31837">MSKRLLLFDFDETYFKHNTNEEDLSHLREMEKLLEKLTNNNEVITAVLTGSTFQSVMDKMDQVNMTFKPLHIFSDLSSKMFTWNNGEYVESETYKKKVLSEPFLFEDIEDILRHISAQYNVEFIPQRAFEGNETHYNFYFHSTGNHNNDSRILEALVRYANDQNYTARFSRSNPLAGDPENAYDIDFTPSNAGKLYATQFLMRKYNIPVKSILGFGDSGNDEAYLSYLEHAYLMSNSRDEALKQKFRLTKYPYYQGITLHVKEFVEGKYDY</sequence>
<keyword id="KW-0378">Hydrolase</keyword>
<keyword id="KW-1185">Reference proteome</keyword>
<comment type="similarity">
    <text evidence="1">Belongs to the HAD-like hydrolase superfamily.</text>
</comment>
<proteinExistence type="inferred from homology"/>